<proteinExistence type="inferred from homology"/>
<comment type="function">
    <text evidence="1">NAD-binding protein involved in the addition of a carboxymethylaminomethyl (cmnm) group at the wobble position (U34) of certain tRNAs, forming tRNA-cmnm(5)s(2)U34.</text>
</comment>
<comment type="cofactor">
    <cofactor evidence="1">
        <name>FAD</name>
        <dbReference type="ChEBI" id="CHEBI:57692"/>
    </cofactor>
</comment>
<comment type="subunit">
    <text evidence="1">Homodimer. Heterotetramer of two MnmE and two MnmG subunits.</text>
</comment>
<comment type="subcellular location">
    <subcellularLocation>
        <location evidence="1">Cytoplasm</location>
    </subcellularLocation>
</comment>
<comment type="similarity">
    <text evidence="1">Belongs to the MnmG family.</text>
</comment>
<feature type="chain" id="PRO_1000016684" description="tRNA uridine 5-carboxymethylaminomethyl modification enzyme MnmG">
    <location>
        <begin position="1"/>
        <end position="625"/>
    </location>
</feature>
<feature type="binding site" evidence="1">
    <location>
        <begin position="11"/>
        <end position="16"/>
    </location>
    <ligand>
        <name>FAD</name>
        <dbReference type="ChEBI" id="CHEBI:57692"/>
    </ligand>
</feature>
<feature type="binding site" evidence="1">
    <location>
        <position position="123"/>
    </location>
    <ligand>
        <name>FAD</name>
        <dbReference type="ChEBI" id="CHEBI:57692"/>
    </ligand>
</feature>
<feature type="binding site" evidence="1">
    <location>
        <position position="178"/>
    </location>
    <ligand>
        <name>FAD</name>
        <dbReference type="ChEBI" id="CHEBI:57692"/>
    </ligand>
</feature>
<feature type="binding site" evidence="1">
    <location>
        <begin position="270"/>
        <end position="284"/>
    </location>
    <ligand>
        <name>NAD(+)</name>
        <dbReference type="ChEBI" id="CHEBI:57540"/>
    </ligand>
</feature>
<feature type="binding site" evidence="1">
    <location>
        <position position="367"/>
    </location>
    <ligand>
        <name>FAD</name>
        <dbReference type="ChEBI" id="CHEBI:57692"/>
    </ligand>
</feature>
<sequence length="625" mass="70116">MVQEYDVIVIGAGHAGVEAGLASARRGAKTLMLTINLDNIAFMPCNPSVGGPAKGIVVREIDALGGQMAKTIDKTHIQMRMLNTGKGPAVRALRAQADKVLYQQEMKRVIEDEENLHIMQGMVDELIIEDNEVKGVRTNIGTEYLSKAVIITTGTFLRGEIILGNMKYSSGPNHQLPSITLSDNLRELGFDIVRFKTGTPPRVNSKTIDYSKTEIQPGDDVGRAFSFETTEYILDQLPCWLTYTNAETHKVIDDNLHLSAMYSGMIKGTGPRYCPSIEDKFVRFNDKPRHQLFLEPEGRNTNEVYVQGLSTSLPEHVQRQMLETIPGLEKADMMRAGYAIEYDAIVPTQLWPTLETKMIKNLYTAGQINGTSGYEEAAGQGLMAGINAAGKVLNTGEKILSRSDAYIGVLIDDLVTKGTNEPYRLLTSRAEYRLLLRHDNADLRLTDMGYELGMISEERYARFNEKRQQIDAEIKRLSDIRIKPNEHTQAIIEQHGGSRLKDGILAIDLLRRPEMTYDIILEILEEEHQLNADVEEQVEIQTKYEGYINKSLQQVEKVKRMEEKKIPEDLDYSKIDSLATEAREKLSEVKPLNIAQASRISGVNPADISILLIYLEQGKLQRVSD</sequence>
<reference key="1">
    <citation type="journal article" date="2008" name="Antimicrob. Agents Chemother.">
        <title>Mutated response regulator graR is responsible for phenotypic conversion of Staphylococcus aureus from heterogeneous vancomycin-intermediate resistance to vancomycin-intermediate resistance.</title>
        <authorList>
            <person name="Neoh H.-M."/>
            <person name="Cui L."/>
            <person name="Yuzawa H."/>
            <person name="Takeuchi F."/>
            <person name="Matsuo M."/>
            <person name="Hiramatsu K."/>
        </authorList>
    </citation>
    <scope>NUCLEOTIDE SEQUENCE [LARGE SCALE GENOMIC DNA]</scope>
    <source>
        <strain>Mu3 / ATCC 700698</strain>
    </source>
</reference>
<accession>A7X7A7</accession>
<dbReference type="EMBL" id="AP009324">
    <property type="protein sequence ID" value="BAF79578.1"/>
    <property type="molecule type" value="Genomic_DNA"/>
</dbReference>
<dbReference type="RefSeq" id="WP_000249657.1">
    <property type="nucleotide sequence ID" value="NZ_CTYB01000035.1"/>
</dbReference>
<dbReference type="SMR" id="A7X7A7"/>
<dbReference type="KEGG" id="saw:SAHV_2695"/>
<dbReference type="HOGENOM" id="CLU_007831_2_2_9"/>
<dbReference type="GO" id="GO:0005829">
    <property type="term" value="C:cytosol"/>
    <property type="evidence" value="ECO:0007669"/>
    <property type="project" value="TreeGrafter"/>
</dbReference>
<dbReference type="GO" id="GO:0050660">
    <property type="term" value="F:flavin adenine dinucleotide binding"/>
    <property type="evidence" value="ECO:0007669"/>
    <property type="project" value="UniProtKB-UniRule"/>
</dbReference>
<dbReference type="GO" id="GO:0030488">
    <property type="term" value="P:tRNA methylation"/>
    <property type="evidence" value="ECO:0007669"/>
    <property type="project" value="TreeGrafter"/>
</dbReference>
<dbReference type="GO" id="GO:0002098">
    <property type="term" value="P:tRNA wobble uridine modification"/>
    <property type="evidence" value="ECO:0007669"/>
    <property type="project" value="InterPro"/>
</dbReference>
<dbReference type="FunFam" id="1.10.10.1800:FF:000001">
    <property type="entry name" value="tRNA uridine 5-carboxymethylaminomethyl modification enzyme MnmG"/>
    <property type="match status" value="1"/>
</dbReference>
<dbReference type="FunFam" id="1.10.150.570:FF:000001">
    <property type="entry name" value="tRNA uridine 5-carboxymethylaminomethyl modification enzyme MnmG"/>
    <property type="match status" value="1"/>
</dbReference>
<dbReference type="FunFam" id="3.50.50.60:FF:000002">
    <property type="entry name" value="tRNA uridine 5-carboxymethylaminomethyl modification enzyme MnmG"/>
    <property type="match status" value="1"/>
</dbReference>
<dbReference type="FunFam" id="3.50.50.60:FF:000063">
    <property type="entry name" value="tRNA uridine 5-carboxymethylaminomethyl modification enzyme MnmG"/>
    <property type="match status" value="1"/>
</dbReference>
<dbReference type="Gene3D" id="3.50.50.60">
    <property type="entry name" value="FAD/NAD(P)-binding domain"/>
    <property type="match status" value="2"/>
</dbReference>
<dbReference type="Gene3D" id="1.10.150.570">
    <property type="entry name" value="GidA associated domain, C-terminal subdomain"/>
    <property type="match status" value="1"/>
</dbReference>
<dbReference type="Gene3D" id="1.10.10.1800">
    <property type="entry name" value="tRNA uridine 5-carboxymethylaminomethyl modification enzyme MnmG/GidA"/>
    <property type="match status" value="1"/>
</dbReference>
<dbReference type="HAMAP" id="MF_00129">
    <property type="entry name" value="MnmG_GidA"/>
    <property type="match status" value="1"/>
</dbReference>
<dbReference type="InterPro" id="IPR036188">
    <property type="entry name" value="FAD/NAD-bd_sf"/>
</dbReference>
<dbReference type="InterPro" id="IPR049312">
    <property type="entry name" value="GIDA_C_N"/>
</dbReference>
<dbReference type="InterPro" id="IPR004416">
    <property type="entry name" value="MnmG"/>
</dbReference>
<dbReference type="InterPro" id="IPR002218">
    <property type="entry name" value="MnmG-rel"/>
</dbReference>
<dbReference type="InterPro" id="IPR020595">
    <property type="entry name" value="MnmG-rel_CS"/>
</dbReference>
<dbReference type="InterPro" id="IPR026904">
    <property type="entry name" value="MnmG_C"/>
</dbReference>
<dbReference type="InterPro" id="IPR047001">
    <property type="entry name" value="MnmG_C_subdom"/>
</dbReference>
<dbReference type="InterPro" id="IPR044920">
    <property type="entry name" value="MnmG_C_subdom_sf"/>
</dbReference>
<dbReference type="InterPro" id="IPR040131">
    <property type="entry name" value="MnmG_N"/>
</dbReference>
<dbReference type="NCBIfam" id="TIGR00136">
    <property type="entry name" value="mnmG_gidA"/>
    <property type="match status" value="1"/>
</dbReference>
<dbReference type="PANTHER" id="PTHR11806">
    <property type="entry name" value="GLUCOSE INHIBITED DIVISION PROTEIN A"/>
    <property type="match status" value="1"/>
</dbReference>
<dbReference type="PANTHER" id="PTHR11806:SF0">
    <property type="entry name" value="PROTEIN MTO1 HOMOLOG, MITOCHONDRIAL"/>
    <property type="match status" value="1"/>
</dbReference>
<dbReference type="Pfam" id="PF01134">
    <property type="entry name" value="GIDA"/>
    <property type="match status" value="1"/>
</dbReference>
<dbReference type="Pfam" id="PF21680">
    <property type="entry name" value="GIDA_C_1st"/>
    <property type="match status" value="1"/>
</dbReference>
<dbReference type="Pfam" id="PF13932">
    <property type="entry name" value="SAM_GIDA_C"/>
    <property type="match status" value="1"/>
</dbReference>
<dbReference type="PRINTS" id="PR00411">
    <property type="entry name" value="PNDRDTASEI"/>
</dbReference>
<dbReference type="SMART" id="SM01228">
    <property type="entry name" value="GIDA_assoc_3"/>
    <property type="match status" value="1"/>
</dbReference>
<dbReference type="SUPFAM" id="SSF51905">
    <property type="entry name" value="FAD/NAD(P)-binding domain"/>
    <property type="match status" value="1"/>
</dbReference>
<dbReference type="PROSITE" id="PS01280">
    <property type="entry name" value="GIDA_1"/>
    <property type="match status" value="1"/>
</dbReference>
<dbReference type="PROSITE" id="PS01281">
    <property type="entry name" value="GIDA_2"/>
    <property type="match status" value="1"/>
</dbReference>
<evidence type="ECO:0000255" key="1">
    <source>
        <dbReference type="HAMAP-Rule" id="MF_00129"/>
    </source>
</evidence>
<organism>
    <name type="scientific">Staphylococcus aureus (strain Mu3 / ATCC 700698)</name>
    <dbReference type="NCBI Taxonomy" id="418127"/>
    <lineage>
        <taxon>Bacteria</taxon>
        <taxon>Bacillati</taxon>
        <taxon>Bacillota</taxon>
        <taxon>Bacilli</taxon>
        <taxon>Bacillales</taxon>
        <taxon>Staphylococcaceae</taxon>
        <taxon>Staphylococcus</taxon>
    </lineage>
</organism>
<name>MNMG_STAA1</name>
<protein>
    <recommendedName>
        <fullName evidence="1">tRNA uridine 5-carboxymethylaminomethyl modification enzyme MnmG</fullName>
    </recommendedName>
    <alternativeName>
        <fullName evidence="1">Glucose-inhibited division protein A</fullName>
    </alternativeName>
</protein>
<keyword id="KW-0963">Cytoplasm</keyword>
<keyword id="KW-0274">FAD</keyword>
<keyword id="KW-0285">Flavoprotein</keyword>
<keyword id="KW-0520">NAD</keyword>
<keyword id="KW-0819">tRNA processing</keyword>
<gene>
    <name evidence="1" type="primary">mnmG</name>
    <name evidence="1" type="synonym">gidA</name>
    <name type="ordered locus">SAHV_2695</name>
</gene>